<accession>A1W8D4</accession>
<organism>
    <name type="scientific">Acidovorax sp. (strain JS42)</name>
    <dbReference type="NCBI Taxonomy" id="232721"/>
    <lineage>
        <taxon>Bacteria</taxon>
        <taxon>Pseudomonadati</taxon>
        <taxon>Pseudomonadota</taxon>
        <taxon>Betaproteobacteria</taxon>
        <taxon>Burkholderiales</taxon>
        <taxon>Comamonadaceae</taxon>
        <taxon>Acidovorax</taxon>
    </lineage>
</organism>
<keyword id="KW-0227">DNA damage</keyword>
<keyword id="KW-0233">DNA recombination</keyword>
<keyword id="KW-0234">DNA repair</keyword>
<keyword id="KW-0479">Metal-binding</keyword>
<keyword id="KW-0862">Zinc</keyword>
<keyword id="KW-0863">Zinc-finger</keyword>
<comment type="function">
    <text evidence="1">May play a role in DNA repair. It seems to be involved in an RecBC-independent recombinational process of DNA repair. It may act with RecF and RecO.</text>
</comment>
<comment type="similarity">
    <text evidence="1">Belongs to the RecR family.</text>
</comment>
<feature type="chain" id="PRO_0000322854" description="Recombination protein RecR">
    <location>
        <begin position="1"/>
        <end position="196"/>
    </location>
</feature>
<feature type="domain" description="Toprim" evidence="1">
    <location>
        <begin position="80"/>
        <end position="175"/>
    </location>
</feature>
<feature type="zinc finger region" description="C4-type" evidence="1">
    <location>
        <begin position="57"/>
        <end position="72"/>
    </location>
</feature>
<protein>
    <recommendedName>
        <fullName evidence="1">Recombination protein RecR</fullName>
    </recommendedName>
</protein>
<proteinExistence type="inferred from homology"/>
<sequence>MSDTSSLDALIQALRRLPGVGVKSAQRMAFHLLQHDRAGAQVLSQALAQAATQVRHCERCHTFTEGAVCETCLDPARDATRLCVVETPADQAAMERTAAFKGLYFVLMGRLSPLDGVGPRDIGVHNLLERASDGVVQEVILATSFTAEGEATAHAIGEALKRRGVHVTRLARGVPVGSELEYVDLGTIAHALADRR</sequence>
<evidence type="ECO:0000255" key="1">
    <source>
        <dbReference type="HAMAP-Rule" id="MF_00017"/>
    </source>
</evidence>
<dbReference type="EMBL" id="CP000539">
    <property type="protein sequence ID" value="ABM42509.1"/>
    <property type="molecule type" value="Genomic_DNA"/>
</dbReference>
<dbReference type="SMR" id="A1W8D4"/>
<dbReference type="STRING" id="232721.Ajs_2348"/>
<dbReference type="KEGG" id="ajs:Ajs_2348"/>
<dbReference type="eggNOG" id="COG0353">
    <property type="taxonomic scope" value="Bacteria"/>
</dbReference>
<dbReference type="HOGENOM" id="CLU_060739_1_2_4"/>
<dbReference type="Proteomes" id="UP000000645">
    <property type="component" value="Chromosome"/>
</dbReference>
<dbReference type="GO" id="GO:0003677">
    <property type="term" value="F:DNA binding"/>
    <property type="evidence" value="ECO:0007669"/>
    <property type="project" value="UniProtKB-UniRule"/>
</dbReference>
<dbReference type="GO" id="GO:0008270">
    <property type="term" value="F:zinc ion binding"/>
    <property type="evidence" value="ECO:0007669"/>
    <property type="project" value="UniProtKB-KW"/>
</dbReference>
<dbReference type="GO" id="GO:0006310">
    <property type="term" value="P:DNA recombination"/>
    <property type="evidence" value="ECO:0007669"/>
    <property type="project" value="UniProtKB-UniRule"/>
</dbReference>
<dbReference type="GO" id="GO:0006281">
    <property type="term" value="P:DNA repair"/>
    <property type="evidence" value="ECO:0007669"/>
    <property type="project" value="UniProtKB-UniRule"/>
</dbReference>
<dbReference type="CDD" id="cd01025">
    <property type="entry name" value="TOPRIM_recR"/>
    <property type="match status" value="1"/>
</dbReference>
<dbReference type="Gene3D" id="3.40.1360.10">
    <property type="match status" value="1"/>
</dbReference>
<dbReference type="Gene3D" id="6.10.250.240">
    <property type="match status" value="1"/>
</dbReference>
<dbReference type="Gene3D" id="1.10.8.420">
    <property type="entry name" value="RecR Domain 1"/>
    <property type="match status" value="1"/>
</dbReference>
<dbReference type="HAMAP" id="MF_00017">
    <property type="entry name" value="RecR"/>
    <property type="match status" value="1"/>
</dbReference>
<dbReference type="InterPro" id="IPR000093">
    <property type="entry name" value="DNA_Rcmb_RecR"/>
</dbReference>
<dbReference type="InterPro" id="IPR023627">
    <property type="entry name" value="Rcmb_RecR"/>
</dbReference>
<dbReference type="InterPro" id="IPR015967">
    <property type="entry name" value="Rcmb_RecR_Znf"/>
</dbReference>
<dbReference type="InterPro" id="IPR006171">
    <property type="entry name" value="TOPRIM_dom"/>
</dbReference>
<dbReference type="InterPro" id="IPR034137">
    <property type="entry name" value="TOPRIM_RecR"/>
</dbReference>
<dbReference type="NCBIfam" id="TIGR00615">
    <property type="entry name" value="recR"/>
    <property type="match status" value="1"/>
</dbReference>
<dbReference type="PANTHER" id="PTHR30446">
    <property type="entry name" value="RECOMBINATION PROTEIN RECR"/>
    <property type="match status" value="1"/>
</dbReference>
<dbReference type="PANTHER" id="PTHR30446:SF0">
    <property type="entry name" value="RECOMBINATION PROTEIN RECR"/>
    <property type="match status" value="1"/>
</dbReference>
<dbReference type="Pfam" id="PF21175">
    <property type="entry name" value="RecR_C"/>
    <property type="match status" value="1"/>
</dbReference>
<dbReference type="Pfam" id="PF21176">
    <property type="entry name" value="RecR_HhH"/>
    <property type="match status" value="1"/>
</dbReference>
<dbReference type="Pfam" id="PF02132">
    <property type="entry name" value="RecR_ZnF"/>
    <property type="match status" value="1"/>
</dbReference>
<dbReference type="Pfam" id="PF13662">
    <property type="entry name" value="Toprim_4"/>
    <property type="match status" value="1"/>
</dbReference>
<dbReference type="SMART" id="SM00493">
    <property type="entry name" value="TOPRIM"/>
    <property type="match status" value="1"/>
</dbReference>
<dbReference type="SUPFAM" id="SSF111304">
    <property type="entry name" value="Recombination protein RecR"/>
    <property type="match status" value="1"/>
</dbReference>
<dbReference type="PROSITE" id="PS50880">
    <property type="entry name" value="TOPRIM"/>
    <property type="match status" value="1"/>
</dbReference>
<gene>
    <name evidence="1" type="primary">recR</name>
    <name type="ordered locus">Ajs_2348</name>
</gene>
<name>RECR_ACISJ</name>
<reference key="1">
    <citation type="submission" date="2006-12" db="EMBL/GenBank/DDBJ databases">
        <title>Complete sequence of chromosome 1 of Acidovorax sp. JS42.</title>
        <authorList>
            <person name="Copeland A."/>
            <person name="Lucas S."/>
            <person name="Lapidus A."/>
            <person name="Barry K."/>
            <person name="Detter J.C."/>
            <person name="Glavina del Rio T."/>
            <person name="Dalin E."/>
            <person name="Tice H."/>
            <person name="Pitluck S."/>
            <person name="Chertkov O."/>
            <person name="Brettin T."/>
            <person name="Bruce D."/>
            <person name="Han C."/>
            <person name="Tapia R."/>
            <person name="Gilna P."/>
            <person name="Schmutz J."/>
            <person name="Larimer F."/>
            <person name="Land M."/>
            <person name="Hauser L."/>
            <person name="Kyrpides N."/>
            <person name="Kim E."/>
            <person name="Stahl D."/>
            <person name="Richardson P."/>
        </authorList>
    </citation>
    <scope>NUCLEOTIDE SEQUENCE [LARGE SCALE GENOMIC DNA]</scope>
    <source>
        <strain>JS42</strain>
    </source>
</reference>